<evidence type="ECO:0000256" key="1">
    <source>
        <dbReference type="SAM" id="MobiDB-lite"/>
    </source>
</evidence>
<evidence type="ECO:0000269" key="2">
    <source>
    </source>
</evidence>
<evidence type="ECO:0000269" key="3">
    <source>
    </source>
</evidence>
<evidence type="ECO:0000303" key="4">
    <source>
    </source>
</evidence>
<evidence type="ECO:0000303" key="5">
    <source>
    </source>
</evidence>
<evidence type="ECO:0000305" key="6"/>
<evidence type="ECO:0000312" key="7">
    <source>
        <dbReference type="Araport" id="AT4G17330"/>
    </source>
</evidence>
<evidence type="ECO:0000312" key="8">
    <source>
        <dbReference type="EMBL" id="CAB10513.1"/>
    </source>
</evidence>
<evidence type="ECO:0000312" key="9">
    <source>
        <dbReference type="EMBL" id="CAB78735.1"/>
    </source>
</evidence>
<evidence type="ECO:0000312" key="10">
    <source>
        <dbReference type="TAIR" id="AT4G17330"/>
    </source>
</evidence>
<comment type="function">
    <text evidence="2">Under salt stress, appears to prevent the accumulation of reactive oxygen species (ROS) in roots and required for the maintenance of cell wall integrity (cellulose, pectin and lignin composition) by interacting with importin alpha (e.g. IMPA1 and IMPA2) and binding to the promoter of several ROS- and cell wall-related genes to regulate their expression (PubMed:37676567). Necessary for cells organization in meristems and root elongation zones as well as for root elongation in high salinity, but not upon osmotic stress (PubMed:37676567).</text>
</comment>
<comment type="subunit">
    <text evidence="2">Interacts with importin alpha IMPA1 and IMPA2, required for nuclear-localized proteins import.</text>
</comment>
<comment type="subcellular location">
    <subcellularLocation>
        <location evidence="2">Nucleus</location>
    </subcellularLocation>
</comment>
<comment type="tissue specificity">
    <text evidence="3">Mainly expressed in seedlings, flower buds and stems, and, to a lower extent, in leaves and siliques.</text>
</comment>
<comment type="disruption phenotype">
    <text evidence="2">Swollen root tips, disordered root cell morphology and root elongation inhibition under salt stress, accompanied by increased accumulation of reactive oxygen species (ROS) such as hydrogen peroxide H(2)O(2) in the roots (PubMed:37676567). Reduced accumulation of cellulose and pectin but increased lignin levels under high salinity (PubMed:37676567). Salt-hypersensitivity is exacerbated in plants lacking also IMPA1 and IMPA2 (PubMed:37676567).</text>
</comment>
<comment type="sequence caution" evidence="6">
    <conflict type="erroneous initiation">
        <sequence resource="EMBL-CDS" id="AAM20581"/>
    </conflict>
    <text>Truncated N-terminus.</text>
</comment>
<comment type="sequence caution" evidence="6">
    <conflict type="erroneous gene model prediction">
        <sequence resource="EMBL-CDS" id="CAB10513"/>
    </conflict>
</comment>
<comment type="sequence caution" evidence="6">
    <conflict type="erroneous gene model prediction">
        <sequence resource="EMBL-CDS" id="CAB78735"/>
    </conflict>
</comment>
<proteinExistence type="evidence at protein level"/>
<dbReference type="EMBL" id="Z97343">
    <property type="protein sequence ID" value="CAB10513.1"/>
    <property type="status" value="ALT_SEQ"/>
    <property type="molecule type" value="Genomic_DNA"/>
</dbReference>
<dbReference type="EMBL" id="AL161546">
    <property type="protein sequence ID" value="CAB78735.1"/>
    <property type="status" value="ALT_SEQ"/>
    <property type="molecule type" value="Genomic_DNA"/>
</dbReference>
<dbReference type="EMBL" id="CP002687">
    <property type="protein sequence ID" value="AEE83877.1"/>
    <property type="molecule type" value="Genomic_DNA"/>
</dbReference>
<dbReference type="EMBL" id="CP002687">
    <property type="protein sequence ID" value="ANM67438.1"/>
    <property type="molecule type" value="Genomic_DNA"/>
</dbReference>
<dbReference type="EMBL" id="AY099730">
    <property type="protein sequence ID" value="AAM20581.1"/>
    <property type="status" value="ALT_INIT"/>
    <property type="molecule type" value="mRNA"/>
</dbReference>
<dbReference type="EMBL" id="BT008431">
    <property type="protein sequence ID" value="AAP37790.1"/>
    <property type="molecule type" value="mRNA"/>
</dbReference>
<dbReference type="EMBL" id="AJ222646">
    <property type="protein sequence ID" value="CAA10906.1"/>
    <property type="molecule type" value="mRNA"/>
</dbReference>
<dbReference type="PIR" id="D71442">
    <property type="entry name" value="D71442"/>
</dbReference>
<dbReference type="RefSeq" id="NP_001329269.1">
    <property type="nucleotide sequence ID" value="NM_001341214.1"/>
</dbReference>
<dbReference type="RefSeq" id="NP_193464.5">
    <property type="nucleotide sequence ID" value="NM_117837.7"/>
</dbReference>
<dbReference type="SMR" id="F4JP43"/>
<dbReference type="FunCoup" id="F4JP43">
    <property type="interactions" value="1663"/>
</dbReference>
<dbReference type="IntAct" id="F4JP43">
    <property type="interactions" value="1"/>
</dbReference>
<dbReference type="STRING" id="3702.F4JP43"/>
<dbReference type="GlyGen" id="F4JP43">
    <property type="glycosylation" value="14 sites, 1 O-linked glycan (12 sites)"/>
</dbReference>
<dbReference type="iPTMnet" id="F4JP43"/>
<dbReference type="PaxDb" id="3702-AT4G17330.1"/>
<dbReference type="ProteomicsDB" id="185776"/>
<dbReference type="EnsemblPlants" id="AT4G17330.1">
    <property type="protein sequence ID" value="AT4G17330.1"/>
    <property type="gene ID" value="AT4G17330"/>
</dbReference>
<dbReference type="EnsemblPlants" id="AT4G17330.2">
    <property type="protein sequence ID" value="AT4G17330.2"/>
    <property type="gene ID" value="AT4G17330"/>
</dbReference>
<dbReference type="GeneID" id="827445"/>
<dbReference type="Gramene" id="AT4G17330.1">
    <property type="protein sequence ID" value="AT4G17330.1"/>
    <property type="gene ID" value="AT4G17330"/>
</dbReference>
<dbReference type="Gramene" id="AT4G17330.2">
    <property type="protein sequence ID" value="AT4G17330.2"/>
    <property type="gene ID" value="AT4G17330"/>
</dbReference>
<dbReference type="KEGG" id="ath:AT4G17330"/>
<dbReference type="Araport" id="AT4G17330"/>
<dbReference type="TAIR" id="AT4G17330">
    <property type="gene designation" value="G2484-1"/>
</dbReference>
<dbReference type="eggNOG" id="KOG1181">
    <property type="taxonomic scope" value="Eukaryota"/>
</dbReference>
<dbReference type="HOGENOM" id="CLU_001532_1_0_1"/>
<dbReference type="OMA" id="YWKSDQV"/>
<dbReference type="Proteomes" id="UP000006548">
    <property type="component" value="Chromosome 4"/>
</dbReference>
<dbReference type="ExpressionAtlas" id="F4JP43">
    <property type="expression patterns" value="baseline and differential"/>
</dbReference>
<dbReference type="GO" id="GO:0005634">
    <property type="term" value="C:nucleus"/>
    <property type="evidence" value="ECO:0000314"/>
    <property type="project" value="UniProtKB"/>
</dbReference>
<dbReference type="GO" id="GO:0009506">
    <property type="term" value="C:plasmodesma"/>
    <property type="evidence" value="ECO:0007005"/>
    <property type="project" value="TAIR"/>
</dbReference>
<dbReference type="GO" id="GO:1990841">
    <property type="term" value="F:promoter-specific chromatin binding"/>
    <property type="evidence" value="ECO:0000314"/>
    <property type="project" value="UniProtKB"/>
</dbReference>
<dbReference type="GO" id="GO:0071555">
    <property type="term" value="P:cell wall organization"/>
    <property type="evidence" value="ECO:0000315"/>
    <property type="project" value="UniProtKB"/>
</dbReference>
<dbReference type="GO" id="GO:0010468">
    <property type="term" value="P:regulation of gene expression"/>
    <property type="evidence" value="ECO:0000314"/>
    <property type="project" value="UniProtKB"/>
</dbReference>
<dbReference type="GO" id="GO:0009934">
    <property type="term" value="P:regulation of meristem structural organization"/>
    <property type="evidence" value="ECO:0000315"/>
    <property type="project" value="UniProtKB"/>
</dbReference>
<dbReference type="GO" id="GO:2000280">
    <property type="term" value="P:regulation of root development"/>
    <property type="evidence" value="ECO:0000315"/>
    <property type="project" value="UniProtKB"/>
</dbReference>
<dbReference type="GO" id="GO:0009651">
    <property type="term" value="P:response to salt stress"/>
    <property type="evidence" value="ECO:0000315"/>
    <property type="project" value="UniProtKB"/>
</dbReference>
<dbReference type="InterPro" id="IPR008395">
    <property type="entry name" value="Agenet-like_dom"/>
</dbReference>
<dbReference type="InterPro" id="IPR014002">
    <property type="entry name" value="Agenet_dom_plant"/>
</dbReference>
<dbReference type="InterPro" id="IPR055274">
    <property type="entry name" value="SWO1"/>
</dbReference>
<dbReference type="PANTHER" id="PTHR48429">
    <property type="entry name" value="AGENET DOMAIN-CONTAINING PROTEIN"/>
    <property type="match status" value="1"/>
</dbReference>
<dbReference type="PANTHER" id="PTHR48429:SF1">
    <property type="entry name" value="AGENET DOMAIN-CONTAINING PROTEIN"/>
    <property type="match status" value="1"/>
</dbReference>
<dbReference type="Pfam" id="PF05641">
    <property type="entry name" value="Agenet"/>
    <property type="match status" value="1"/>
</dbReference>
<dbReference type="SMART" id="SM00743">
    <property type="entry name" value="Agenet"/>
    <property type="match status" value="2"/>
</dbReference>
<name>SWO1_ARATH</name>
<protein>
    <recommendedName>
        <fullName evidence="4">Protein SWOLLEN 1</fullName>
    </recommendedName>
    <alternativeName>
        <fullName evidence="5">Protein G2484-1</fullName>
        <shortName evidence="5">AtG2484-1</shortName>
    </alternativeName>
</protein>
<reference key="1">
    <citation type="journal article" date="1998" name="Nature">
        <title>Analysis of 1.9 Mb of contiguous sequence from chromosome 4 of Arabidopsis thaliana.</title>
        <authorList>
            <person name="Bevan M."/>
            <person name="Bancroft I."/>
            <person name="Bent E."/>
            <person name="Love K."/>
            <person name="Goodman H.M."/>
            <person name="Dean C."/>
            <person name="Bergkamp R."/>
            <person name="Dirkse W."/>
            <person name="van Staveren M."/>
            <person name="Stiekema W."/>
            <person name="Drost L."/>
            <person name="Ridley P."/>
            <person name="Hudson S.-A."/>
            <person name="Patel K."/>
            <person name="Murphy G."/>
            <person name="Piffanelli P."/>
            <person name="Wedler H."/>
            <person name="Wedler E."/>
            <person name="Wambutt R."/>
            <person name="Weitzenegger T."/>
            <person name="Pohl T."/>
            <person name="Terryn N."/>
            <person name="Gielen J."/>
            <person name="Villarroel R."/>
            <person name="De Clercq R."/>
            <person name="van Montagu M."/>
            <person name="Lecharny A."/>
            <person name="Aubourg S."/>
            <person name="Gy I."/>
            <person name="Kreis M."/>
            <person name="Lao N."/>
            <person name="Kavanagh T."/>
            <person name="Hempel S."/>
            <person name="Kotter P."/>
            <person name="Entian K.-D."/>
            <person name="Rieger M."/>
            <person name="Schaefer M."/>
            <person name="Funk B."/>
            <person name="Mueller-Auer S."/>
            <person name="Silvey M."/>
            <person name="James R."/>
            <person name="Monfort A."/>
            <person name="Pons A."/>
            <person name="Puigdomenech P."/>
            <person name="Douka A."/>
            <person name="Voukelatou E."/>
            <person name="Milioni D."/>
            <person name="Hatzopoulos P."/>
            <person name="Piravandi E."/>
            <person name="Obermaier B."/>
            <person name="Hilbert H."/>
            <person name="Duesterhoeft A."/>
            <person name="Moores T."/>
            <person name="Jones J.D.G."/>
            <person name="Eneva T."/>
            <person name="Palme K."/>
            <person name="Benes V."/>
            <person name="Rechmann S."/>
            <person name="Ansorge W."/>
            <person name="Cooke R."/>
            <person name="Berger C."/>
            <person name="Delseny M."/>
            <person name="Voet M."/>
            <person name="Volckaert G."/>
            <person name="Mewes H.-W."/>
            <person name="Klosterman S."/>
            <person name="Schueller C."/>
            <person name="Chalwatzis N."/>
        </authorList>
    </citation>
    <scope>NUCLEOTIDE SEQUENCE [LARGE SCALE GENOMIC DNA]</scope>
    <source>
        <strain>cv. Columbia</strain>
    </source>
</reference>
<reference key="2">
    <citation type="journal article" date="1999" name="Nature">
        <title>Sequence and analysis of chromosome 4 of the plant Arabidopsis thaliana.</title>
        <authorList>
            <person name="Mayer K.F.X."/>
            <person name="Schueller C."/>
            <person name="Wambutt R."/>
            <person name="Murphy G."/>
            <person name="Volckaert G."/>
            <person name="Pohl T."/>
            <person name="Duesterhoeft A."/>
            <person name="Stiekema W."/>
            <person name="Entian K.-D."/>
            <person name="Terryn N."/>
            <person name="Harris B."/>
            <person name="Ansorge W."/>
            <person name="Brandt P."/>
            <person name="Grivell L.A."/>
            <person name="Rieger M."/>
            <person name="Weichselgartner M."/>
            <person name="de Simone V."/>
            <person name="Obermaier B."/>
            <person name="Mache R."/>
            <person name="Mueller M."/>
            <person name="Kreis M."/>
            <person name="Delseny M."/>
            <person name="Puigdomenech P."/>
            <person name="Watson M."/>
            <person name="Schmidtheini T."/>
            <person name="Reichert B."/>
            <person name="Portetelle D."/>
            <person name="Perez-Alonso M."/>
            <person name="Boutry M."/>
            <person name="Bancroft I."/>
            <person name="Vos P."/>
            <person name="Hoheisel J."/>
            <person name="Zimmermann W."/>
            <person name="Wedler H."/>
            <person name="Ridley P."/>
            <person name="Langham S.-A."/>
            <person name="McCullagh B."/>
            <person name="Bilham L."/>
            <person name="Robben J."/>
            <person name="van der Schueren J."/>
            <person name="Grymonprez B."/>
            <person name="Chuang Y.-J."/>
            <person name="Vandenbussche F."/>
            <person name="Braeken M."/>
            <person name="Weltjens I."/>
            <person name="Voet M."/>
            <person name="Bastiaens I."/>
            <person name="Aert R."/>
            <person name="Defoor E."/>
            <person name="Weitzenegger T."/>
            <person name="Bothe G."/>
            <person name="Ramsperger U."/>
            <person name="Hilbert H."/>
            <person name="Braun M."/>
            <person name="Holzer E."/>
            <person name="Brandt A."/>
            <person name="Peters S."/>
            <person name="van Staveren M."/>
            <person name="Dirkse W."/>
            <person name="Mooijman P."/>
            <person name="Klein Lankhorst R."/>
            <person name="Rose M."/>
            <person name="Hauf J."/>
            <person name="Koetter P."/>
            <person name="Berneiser S."/>
            <person name="Hempel S."/>
            <person name="Feldpausch M."/>
            <person name="Lamberth S."/>
            <person name="Van den Daele H."/>
            <person name="De Keyser A."/>
            <person name="Buysshaert C."/>
            <person name="Gielen J."/>
            <person name="Villarroel R."/>
            <person name="De Clercq R."/>
            <person name="van Montagu M."/>
            <person name="Rogers J."/>
            <person name="Cronin A."/>
            <person name="Quail M.A."/>
            <person name="Bray-Allen S."/>
            <person name="Clark L."/>
            <person name="Doggett J."/>
            <person name="Hall S."/>
            <person name="Kay M."/>
            <person name="Lennard N."/>
            <person name="McLay K."/>
            <person name="Mayes R."/>
            <person name="Pettett A."/>
            <person name="Rajandream M.A."/>
            <person name="Lyne M."/>
            <person name="Benes V."/>
            <person name="Rechmann S."/>
            <person name="Borkova D."/>
            <person name="Bloecker H."/>
            <person name="Scharfe M."/>
            <person name="Grimm M."/>
            <person name="Loehnert T.-H."/>
            <person name="Dose S."/>
            <person name="de Haan M."/>
            <person name="Maarse A.C."/>
            <person name="Schaefer M."/>
            <person name="Mueller-Auer S."/>
            <person name="Gabel C."/>
            <person name="Fuchs M."/>
            <person name="Fartmann B."/>
            <person name="Granderath K."/>
            <person name="Dauner D."/>
            <person name="Herzl A."/>
            <person name="Neumann S."/>
            <person name="Argiriou A."/>
            <person name="Vitale D."/>
            <person name="Liguori R."/>
            <person name="Piravandi E."/>
            <person name="Massenet O."/>
            <person name="Quigley F."/>
            <person name="Clabauld G."/>
            <person name="Muendlein A."/>
            <person name="Felber R."/>
            <person name="Schnabl S."/>
            <person name="Hiller R."/>
            <person name="Schmidt W."/>
            <person name="Lecharny A."/>
            <person name="Aubourg S."/>
            <person name="Chefdor F."/>
            <person name="Cooke R."/>
            <person name="Berger C."/>
            <person name="Monfort A."/>
            <person name="Casacuberta E."/>
            <person name="Gibbons T."/>
            <person name="Weber N."/>
            <person name="Vandenbol M."/>
            <person name="Bargues M."/>
            <person name="Terol J."/>
            <person name="Torres A."/>
            <person name="Perez-Perez A."/>
            <person name="Purnelle B."/>
            <person name="Bent E."/>
            <person name="Johnson S."/>
            <person name="Tacon D."/>
            <person name="Jesse T."/>
            <person name="Heijnen L."/>
            <person name="Schwarz S."/>
            <person name="Scholler P."/>
            <person name="Heber S."/>
            <person name="Francs P."/>
            <person name="Bielke C."/>
            <person name="Frishman D."/>
            <person name="Haase D."/>
            <person name="Lemcke K."/>
            <person name="Mewes H.-W."/>
            <person name="Stocker S."/>
            <person name="Zaccaria P."/>
            <person name="Bevan M."/>
            <person name="Wilson R.K."/>
            <person name="de la Bastide M."/>
            <person name="Habermann K."/>
            <person name="Parnell L."/>
            <person name="Dedhia N."/>
            <person name="Gnoj L."/>
            <person name="Schutz K."/>
            <person name="Huang E."/>
            <person name="Spiegel L."/>
            <person name="Sekhon M."/>
            <person name="Murray J."/>
            <person name="Sheet P."/>
            <person name="Cordes M."/>
            <person name="Abu-Threideh J."/>
            <person name="Stoneking T."/>
            <person name="Kalicki J."/>
            <person name="Graves T."/>
            <person name="Harmon G."/>
            <person name="Edwards J."/>
            <person name="Latreille P."/>
            <person name="Courtney L."/>
            <person name="Cloud J."/>
            <person name="Abbott A."/>
            <person name="Scott K."/>
            <person name="Johnson D."/>
            <person name="Minx P."/>
            <person name="Bentley D."/>
            <person name="Fulton B."/>
            <person name="Miller N."/>
            <person name="Greco T."/>
            <person name="Kemp K."/>
            <person name="Kramer J."/>
            <person name="Fulton L."/>
            <person name="Mardis E."/>
            <person name="Dante M."/>
            <person name="Pepin K."/>
            <person name="Hillier L.W."/>
            <person name="Nelson J."/>
            <person name="Spieth J."/>
            <person name="Ryan E."/>
            <person name="Andrews S."/>
            <person name="Geisel C."/>
            <person name="Layman D."/>
            <person name="Du H."/>
            <person name="Ali J."/>
            <person name="Berghoff A."/>
            <person name="Jones K."/>
            <person name="Drone K."/>
            <person name="Cotton M."/>
            <person name="Joshu C."/>
            <person name="Antonoiu B."/>
            <person name="Zidanic M."/>
            <person name="Strong C."/>
            <person name="Sun H."/>
            <person name="Lamar B."/>
            <person name="Yordan C."/>
            <person name="Ma P."/>
            <person name="Zhong J."/>
            <person name="Preston R."/>
            <person name="Vil D."/>
            <person name="Shekher M."/>
            <person name="Matero A."/>
            <person name="Shah R."/>
            <person name="Swaby I.K."/>
            <person name="O'Shaughnessy A."/>
            <person name="Rodriguez M."/>
            <person name="Hoffman J."/>
            <person name="Till S."/>
            <person name="Granat S."/>
            <person name="Shohdy N."/>
            <person name="Hasegawa A."/>
            <person name="Hameed A."/>
            <person name="Lodhi M."/>
            <person name="Johnson A."/>
            <person name="Chen E."/>
            <person name="Marra M.A."/>
            <person name="Martienssen R."/>
            <person name="McCombie W.R."/>
        </authorList>
    </citation>
    <scope>NUCLEOTIDE SEQUENCE [LARGE SCALE GENOMIC DNA]</scope>
    <source>
        <strain>cv. Columbia</strain>
    </source>
</reference>
<reference key="3">
    <citation type="journal article" date="2017" name="Plant J.">
        <title>Araport11: a complete reannotation of the Arabidopsis thaliana reference genome.</title>
        <authorList>
            <person name="Cheng C.Y."/>
            <person name="Krishnakumar V."/>
            <person name="Chan A.P."/>
            <person name="Thibaud-Nissen F."/>
            <person name="Schobel S."/>
            <person name="Town C.D."/>
        </authorList>
    </citation>
    <scope>GENOME REANNOTATION</scope>
    <source>
        <strain>cv. Columbia</strain>
    </source>
</reference>
<reference key="4">
    <citation type="journal article" date="2003" name="Science">
        <title>Empirical analysis of transcriptional activity in the Arabidopsis genome.</title>
        <authorList>
            <person name="Yamada K."/>
            <person name="Lim J."/>
            <person name="Dale J.M."/>
            <person name="Chen H."/>
            <person name="Shinn P."/>
            <person name="Palm C.J."/>
            <person name="Southwick A.M."/>
            <person name="Wu H.C."/>
            <person name="Kim C.J."/>
            <person name="Nguyen M."/>
            <person name="Pham P.K."/>
            <person name="Cheuk R.F."/>
            <person name="Karlin-Newmann G."/>
            <person name="Liu S.X."/>
            <person name="Lam B."/>
            <person name="Sakano H."/>
            <person name="Wu T."/>
            <person name="Yu G."/>
            <person name="Miranda M."/>
            <person name="Quach H.L."/>
            <person name="Tripp M."/>
            <person name="Chang C.H."/>
            <person name="Lee J.M."/>
            <person name="Toriumi M.J."/>
            <person name="Chan M.M."/>
            <person name="Tang C.C."/>
            <person name="Onodera C.S."/>
            <person name="Deng J.M."/>
            <person name="Akiyama K."/>
            <person name="Ansari Y."/>
            <person name="Arakawa T."/>
            <person name="Banh J."/>
            <person name="Banno F."/>
            <person name="Bowser L."/>
            <person name="Brooks S.Y."/>
            <person name="Carninci P."/>
            <person name="Chao Q."/>
            <person name="Choy N."/>
            <person name="Enju A."/>
            <person name="Goldsmith A.D."/>
            <person name="Gurjal M."/>
            <person name="Hansen N.F."/>
            <person name="Hayashizaki Y."/>
            <person name="Johnson-Hopson C."/>
            <person name="Hsuan V.W."/>
            <person name="Iida K."/>
            <person name="Karnes M."/>
            <person name="Khan S."/>
            <person name="Koesema E."/>
            <person name="Ishida J."/>
            <person name="Jiang P.X."/>
            <person name="Jones T."/>
            <person name="Kawai J."/>
            <person name="Kamiya A."/>
            <person name="Meyers C."/>
            <person name="Nakajima M."/>
            <person name="Narusaka M."/>
            <person name="Seki M."/>
            <person name="Sakurai T."/>
            <person name="Satou M."/>
            <person name="Tamse R."/>
            <person name="Vaysberg M."/>
            <person name="Wallender E.K."/>
            <person name="Wong C."/>
            <person name="Yamamura Y."/>
            <person name="Yuan S."/>
            <person name="Shinozaki K."/>
            <person name="Davis R.W."/>
            <person name="Theologis A."/>
            <person name="Ecker J.R."/>
        </authorList>
    </citation>
    <scope>NUCLEOTIDE SEQUENCE [LARGE SCALE MRNA] OF 850-2037</scope>
    <source>
        <strain>cv. Columbia</strain>
    </source>
</reference>
<reference key="5">
    <citation type="journal article" date="1998" name="Biochim. Biophys. Acta">
        <title>Structure and expression of an asparaginyl-tRNA synthetase gene located on chromosome IV of Arabidopsis thaliana and adjacent to a novel large gene of 15 exons.</title>
        <authorList>
            <person name="Aubourg S."/>
            <person name="Cheron A."/>
            <person name="Kreis M."/>
            <person name="Lecharny A."/>
        </authorList>
    </citation>
    <scope>NUCLEOTIDE SEQUENCE [MRNA] OF 1084-2037</scope>
    <scope>TISSUE SPECIFICITY</scope>
    <source>
        <strain>cv. Columbia</strain>
    </source>
</reference>
<reference key="6">
    <citation type="journal article" date="2021" name="Stress Biol.">
        <title>SWO1 modulates cell wall integrity under salt stress by interacting with importin alpha in Arabidopsis.</title>
        <authorList>
            <person name="Wang Z."/>
            <person name="Wang M."/>
            <person name="Yang C."/>
            <person name="Zhao L."/>
            <person name="Qin G."/>
            <person name="Peng L."/>
            <person name="Zheng Q."/>
            <person name="Nie W."/>
            <person name="Song C.-P."/>
            <person name="Shi H."/>
            <person name="Zhu J.-K."/>
            <person name="Zhao C."/>
        </authorList>
    </citation>
    <scope>FUNCTION</scope>
    <scope>DISRUPTION PHENOTYPE</scope>
    <scope>SUBCELLULAR LOCATION</scope>
    <scope>INTERACTION WITH IMPA1 AND IMPA2</scope>
    <source>
        <strain>cv. Columbia</strain>
    </source>
</reference>
<accession>F4JP43</accession>
<accession>O23575</accession>
<accession>Q8LPI8</accession>
<accession>Q9M0M3</accession>
<feature type="chain" id="PRO_0000461652" description="Protein SWOLLEN 1">
    <location>
        <begin position="1"/>
        <end position="2037"/>
    </location>
</feature>
<feature type="region of interest" description="Disordered" evidence="1">
    <location>
        <begin position="141"/>
        <end position="179"/>
    </location>
</feature>
<feature type="region of interest" description="Disordered" evidence="1">
    <location>
        <begin position="454"/>
        <end position="487"/>
    </location>
</feature>
<feature type="region of interest" description="Disordered" evidence="1">
    <location>
        <begin position="504"/>
        <end position="531"/>
    </location>
</feature>
<feature type="region of interest" description="Disordered" evidence="1">
    <location>
        <begin position="567"/>
        <end position="637"/>
    </location>
</feature>
<feature type="region of interest" description="Disordered" evidence="1">
    <location>
        <begin position="686"/>
        <end position="705"/>
    </location>
</feature>
<feature type="region of interest" description="Disordered" evidence="1">
    <location>
        <begin position="837"/>
        <end position="893"/>
    </location>
</feature>
<feature type="region of interest" description="Disordered" evidence="1">
    <location>
        <begin position="1011"/>
        <end position="1045"/>
    </location>
</feature>
<feature type="region of interest" description="Disordered" evidence="1">
    <location>
        <begin position="1148"/>
        <end position="1197"/>
    </location>
</feature>
<feature type="region of interest" description="Disordered" evidence="1">
    <location>
        <begin position="1729"/>
        <end position="1748"/>
    </location>
</feature>
<feature type="region of interest" description="Disordered" evidence="1">
    <location>
        <begin position="1793"/>
        <end position="1812"/>
    </location>
</feature>
<feature type="region of interest" description="Disordered" evidence="1">
    <location>
        <begin position="1841"/>
        <end position="2037"/>
    </location>
</feature>
<feature type="compositionally biased region" description="Basic and acidic residues" evidence="1">
    <location>
        <begin position="147"/>
        <end position="157"/>
    </location>
</feature>
<feature type="compositionally biased region" description="Polar residues" evidence="1">
    <location>
        <begin position="158"/>
        <end position="176"/>
    </location>
</feature>
<feature type="compositionally biased region" description="Basic and acidic residues" evidence="1">
    <location>
        <begin position="454"/>
        <end position="466"/>
    </location>
</feature>
<feature type="compositionally biased region" description="Low complexity" evidence="1">
    <location>
        <begin position="504"/>
        <end position="514"/>
    </location>
</feature>
<feature type="compositionally biased region" description="Polar residues" evidence="1">
    <location>
        <begin position="515"/>
        <end position="526"/>
    </location>
</feature>
<feature type="compositionally biased region" description="Low complexity" evidence="1">
    <location>
        <begin position="841"/>
        <end position="852"/>
    </location>
</feature>
<feature type="compositionally biased region" description="Basic residues" evidence="1">
    <location>
        <begin position="853"/>
        <end position="865"/>
    </location>
</feature>
<feature type="compositionally biased region" description="Polar residues" evidence="1">
    <location>
        <begin position="1025"/>
        <end position="1041"/>
    </location>
</feature>
<feature type="compositionally biased region" description="Polar residues" evidence="1">
    <location>
        <begin position="1151"/>
        <end position="1171"/>
    </location>
</feature>
<feature type="compositionally biased region" description="Basic residues" evidence="1">
    <location>
        <begin position="1179"/>
        <end position="1189"/>
    </location>
</feature>
<feature type="compositionally biased region" description="Basic and acidic residues" evidence="1">
    <location>
        <begin position="1794"/>
        <end position="1805"/>
    </location>
</feature>
<feature type="compositionally biased region" description="Polar residues" evidence="1">
    <location>
        <begin position="1874"/>
        <end position="1886"/>
    </location>
</feature>
<feature type="compositionally biased region" description="Polar residues" evidence="1">
    <location>
        <begin position="1942"/>
        <end position="1964"/>
    </location>
</feature>
<feature type="compositionally biased region" description="Polar residues" evidence="1">
    <location>
        <begin position="2013"/>
        <end position="2023"/>
    </location>
</feature>
<feature type="compositionally biased region" description="Basic residues" evidence="1">
    <location>
        <begin position="2028"/>
        <end position="2037"/>
    </location>
</feature>
<feature type="sequence conflict" description="In Ref. 5; CAA10906." evidence="6" ref="5">
    <original>A</original>
    <variation>G</variation>
    <location>
        <position position="1328"/>
    </location>
</feature>
<feature type="sequence conflict" description="In Ref. 5; CAA10906." evidence="6" ref="5">
    <original>A</original>
    <variation>G</variation>
    <location>
        <position position="1336"/>
    </location>
</feature>
<feature type="sequence conflict" description="In Ref. 5; CAA10906." evidence="6" ref="5">
    <original>A</original>
    <variation>D</variation>
    <location>
        <position position="1354"/>
    </location>
</feature>
<feature type="sequence conflict" description="In Ref. 5; CAA10906." evidence="6" ref="5">
    <original>Q</original>
    <variation>H</variation>
    <location>
        <position position="1475"/>
    </location>
</feature>
<sequence length="2037" mass="218071">MDYDDSDFQNQNLHLAGEANNKFPPVLQPYALPKFDFDDTLNTHLRFDSLGESEAFLGIEGNEDNNWIEDFSRGSSGIVFSSGATESCAISRHNNVWSEATSSESVAMLLNSVGQDEVIVREDTIKKSDTSHELGCTMETVEPGQTSHERSLSKEETVNLQPNPSVDDTPGESSVVKTDDGQEQVLVKDDSPTAVEEASVEEKNSILTSNTATVEAIDTTDLGKIGTETTDNLLDQTEEKANVESRMEDDCSDGNVQTIITCSGELNNQSTLLPETSNDENVISDHIQSSYNRNDLTADARSILVEGHSDSHIDSASEVEKVEAENIGKTAKPDLKEIELSDVTVLERGDQAPSTLEVGGQDVSGTECQDLLVSTVHTSVAVEASLELAGELTTITNSVSIEKPELLSHQHMEVITSEHESTFQIETETYPQIHVFETSESVYISTMDSMVEAREGGVSKKSDNEGSARTSNLEQSMELPVNANDRDQDVKNSQILSESVVSGSVGYVSGGSTSELAESESQSDSIPTDKSETMIDSSLNLEELQPLSQDGAPAVSLTSSIDLHMVKTSSDDSDQGSYSETKKVYGEPENGQTVPPVDASCSGSQMDQEARKRAEGTKQSTYSVEGCPRSEGSKDAVDADGVGQVLQQQSEELIFEENVVTEAVKAPETLSVLDKDNKNEMPITSSLPILGSEAGKDGQEEDNTAASGGIMAAGTPVTHPKGDAIVLGDSRASTCSESSVKSYVTAIEDAATNLKTPLDSFPTVKTSELQFNNTETNSVKKPEDQNISGFMSAGSPVLNRNETSSSEMNLTPDQLKAGKISKAVIFSQATLVSPIVVGSPSTSSLDKTAAKSSKAKSERKPRRTSKSVGKETSRKGTSVKGATPIEQFQSGGKTNAVNQSLASHIQITQSTEKQRSLQSPALKAFGSLSTPTASLPDLNSSALSSILRRPFTDLQQVQLRAQIFVYGALIQGTAPDEAYMISAFGGADGGKGSWEKSWRTCVVRAQKSLVATPETPLQSRPGKTETPSAGHTNSKESSGTNPMIPLSSPLWSLSTSVDTLQSSSVQRGSAATHQPLLSASHAHQTPPTQNIVGHNTPWMSPLPFRNAWLASQQTSGFDVGSRFPVYPITDPVKLTPMKESSMTLSGAKHVQSGTSSNVSKVTPTLEPTSTVVAPAQHSTRVKSRKRKKMPVSVESGPNILNSLKQTELAASPLVPFTPTPANLGYNAGTLPSVVSMTAVPMDLVSTFPGKKIKSSFPSPIFGGNLVREVKQRSVLSEDTIEKLKEAKMHAEDASALATAAVSHSEYVWKQIEQQSHAGLQPETQDRLASAAVAIAAAAAVAKAAAAAANVAANAALQAKLMAEEASLPNASDQGLPKSYDSILPGQGTPASILKGEGAVVNSSSVLIAAREASKKRVEAATAATKRAENMDSIVKAAELASEAVSQAGILVSMGHPPLLNKLVEAGPSNYWRQAQESQEVQPCKTVVLEKETVSTSEGTFAGPKIVQTEFGGSVNTADGVSGPVPATGKLKGQEGDKYADLAKNNDVVFEPEVGSKFSIDAQQTIKATKNEDIKEGSNVEVFKEEPGLRTAWYSANVLSLEDDKAYVLFSDLSVEQGTDKLKEWVALKGEGDQAPKIRPARSVTALPYEGTRKRRRAALGDHIWKIGDRVDSWVHDSWLEGVITEKNKKDENTVTVHFPAEEETLTIKAWNLRPSLVWKDGKWIECSSSGETISSSHEGDTPKEKRPRLGTPALVAEVKDTSMKIVDDPDLGKPPQTGVLNLGVSENTFNIGKSTREENKPDPLRMKRTGLQKQGSKVIFGVPKPGKKRKFMDVSKHYVSEASTKTQERKEPVKPVRSIVPQNSGIGSWKMPSKTISIEKQTTISRPKTFKPAPKPKEKPGATARIIPRKDSRNTTASDMESDESAENRGPGSGVSFKGTVEEQTTSSSHDTGSKNSSSLSTNKGRVAPTAGRLAKIEEDKALAENSSKTSEGMEPRRSIRRIQPTSRLLEGLQTSMMTSKIPSVSHSKSHLSQSKK</sequence>
<keyword id="KW-0539">Nucleus</keyword>
<keyword id="KW-1185">Reference proteome</keyword>
<keyword id="KW-0346">Stress response</keyword>
<organism>
    <name type="scientific">Arabidopsis thaliana</name>
    <name type="common">Mouse-ear cress</name>
    <dbReference type="NCBI Taxonomy" id="3702"/>
    <lineage>
        <taxon>Eukaryota</taxon>
        <taxon>Viridiplantae</taxon>
        <taxon>Streptophyta</taxon>
        <taxon>Embryophyta</taxon>
        <taxon>Tracheophyta</taxon>
        <taxon>Spermatophyta</taxon>
        <taxon>Magnoliopsida</taxon>
        <taxon>eudicotyledons</taxon>
        <taxon>Gunneridae</taxon>
        <taxon>Pentapetalae</taxon>
        <taxon>rosids</taxon>
        <taxon>malvids</taxon>
        <taxon>Brassicales</taxon>
        <taxon>Brassicaceae</taxon>
        <taxon>Camelineae</taxon>
        <taxon>Arabidopsis</taxon>
    </lineage>
</organism>
<gene>
    <name evidence="4" type="primary">SWO1</name>
    <name evidence="5 10" type="synonym">G2484-1</name>
    <name evidence="7" type="ordered locus">At4g17330</name>
    <name evidence="8" type="ORF">dl4695c</name>
    <name evidence="9" type="ORF">FCAALL.411</name>
</gene>